<proteinExistence type="inferred from homology"/>
<evidence type="ECO:0000250" key="1"/>
<evidence type="ECO:0000255" key="2"/>
<evidence type="ECO:0000305" key="3"/>
<keyword id="KW-0929">Antimicrobial</keyword>
<keyword id="KW-1015">Disulfide bond</keyword>
<keyword id="KW-0295">Fungicide</keyword>
<keyword id="KW-0611">Plant defense</keyword>
<keyword id="KW-1185">Reference proteome</keyword>
<keyword id="KW-0964">Secreted</keyword>
<keyword id="KW-0732">Signal</keyword>
<dbReference type="EMBL" id="AB010695">
    <property type="protein sequence ID" value="BAB10745.1"/>
    <property type="molecule type" value="Genomic_DNA"/>
</dbReference>
<dbReference type="EMBL" id="CP002688">
    <property type="protein sequence ID" value="AED96469.1"/>
    <property type="molecule type" value="Genomic_DNA"/>
</dbReference>
<dbReference type="EMBL" id="DQ447074">
    <property type="protein sequence ID" value="ABE66248.1"/>
    <property type="molecule type" value="mRNA"/>
</dbReference>
<dbReference type="EMBL" id="DQ653367">
    <property type="protein sequence ID" value="ABK28756.1"/>
    <property type="status" value="ALT_SEQ"/>
    <property type="molecule type" value="mRNA"/>
</dbReference>
<dbReference type="RefSeq" id="NP_200233.1">
    <property type="nucleotide sequence ID" value="NM_124802.3"/>
</dbReference>
<dbReference type="PaxDb" id="3702-AT5G54220.1"/>
<dbReference type="EnsemblPlants" id="AT5G54220.1">
    <property type="protein sequence ID" value="AT5G54220.1"/>
    <property type="gene ID" value="AT5G54220"/>
</dbReference>
<dbReference type="GeneID" id="835510"/>
<dbReference type="Gramene" id="AT5G54220.1">
    <property type="protein sequence ID" value="AT5G54220.1"/>
    <property type="gene ID" value="AT5G54220"/>
</dbReference>
<dbReference type="KEGG" id="ath:AT5G54220"/>
<dbReference type="Araport" id="AT5G54220"/>
<dbReference type="TAIR" id="AT5G54220"/>
<dbReference type="HOGENOM" id="CLU_175051_0_0_1"/>
<dbReference type="InParanoid" id="Q9FL73"/>
<dbReference type="OMA" id="YEGCNAT"/>
<dbReference type="PhylomeDB" id="Q9FL73"/>
<dbReference type="PRO" id="PR:Q9FL73"/>
<dbReference type="Proteomes" id="UP000006548">
    <property type="component" value="Chromosome 5"/>
</dbReference>
<dbReference type="ExpressionAtlas" id="Q9FL73">
    <property type="expression patterns" value="baseline and differential"/>
</dbReference>
<dbReference type="GO" id="GO:0005576">
    <property type="term" value="C:extracellular region"/>
    <property type="evidence" value="ECO:0007669"/>
    <property type="project" value="UniProtKB-SubCell"/>
</dbReference>
<dbReference type="GO" id="GO:0050832">
    <property type="term" value="P:defense response to fungus"/>
    <property type="evidence" value="ECO:0007669"/>
    <property type="project" value="UniProtKB-KW"/>
</dbReference>
<dbReference type="GO" id="GO:0031640">
    <property type="term" value="P:killing of cells of another organism"/>
    <property type="evidence" value="ECO:0007669"/>
    <property type="project" value="UniProtKB-KW"/>
</dbReference>
<dbReference type="InterPro" id="IPR056373">
    <property type="entry name" value="Defensin-like_dom"/>
</dbReference>
<dbReference type="Pfam" id="PF24552">
    <property type="entry name" value="Defensin"/>
    <property type="match status" value="1"/>
</dbReference>
<protein>
    <recommendedName>
        <fullName>Defensin-like protein 69</fullName>
    </recommendedName>
</protein>
<reference key="1">
    <citation type="journal article" date="1998" name="DNA Res.">
        <title>Structural analysis of Arabidopsis thaliana chromosome 5. V. Sequence features of the regions of 1,381,565 bp covered by twenty one physically assigned P1 and TAC clones.</title>
        <authorList>
            <person name="Kaneko T."/>
            <person name="Kotani H."/>
            <person name="Nakamura Y."/>
            <person name="Sato S."/>
            <person name="Asamizu E."/>
            <person name="Miyajima N."/>
            <person name="Tabata S."/>
        </authorList>
    </citation>
    <scope>NUCLEOTIDE SEQUENCE [LARGE SCALE GENOMIC DNA]</scope>
    <source>
        <strain>cv. Columbia</strain>
    </source>
</reference>
<reference key="2">
    <citation type="journal article" date="2017" name="Plant J.">
        <title>Araport11: a complete reannotation of the Arabidopsis thaliana reference genome.</title>
        <authorList>
            <person name="Cheng C.Y."/>
            <person name="Krishnakumar V."/>
            <person name="Chan A.P."/>
            <person name="Thibaud-Nissen F."/>
            <person name="Schobel S."/>
            <person name="Town C.D."/>
        </authorList>
    </citation>
    <scope>GENOME REANNOTATION</scope>
    <source>
        <strain>cv. Columbia</strain>
    </source>
</reference>
<reference key="3">
    <citation type="journal article" date="2006" name="Plant Biotechnol. J.">
        <title>Simultaneous high-throughput recombinational cloning of open reading frames in closed and open configurations.</title>
        <authorList>
            <person name="Underwood B.A."/>
            <person name="Vanderhaeghen R."/>
            <person name="Whitford R."/>
            <person name="Town C.D."/>
            <person name="Hilson P."/>
        </authorList>
    </citation>
    <scope>NUCLEOTIDE SEQUENCE [LARGE SCALE MRNA]</scope>
    <source>
        <strain>cv. Columbia</strain>
    </source>
</reference>
<reference key="4">
    <citation type="journal article" date="2005" name="Plant Physiol.">
        <title>Genome organization of more than 300 defensin-like genes in Arabidopsis.</title>
        <authorList>
            <person name="Silverstein K.A.T."/>
            <person name="Graham M.A."/>
            <person name="Paape T.D."/>
            <person name="VandenBosch K.A."/>
        </authorList>
    </citation>
    <scope>GENE FAMILY</scope>
</reference>
<organism>
    <name type="scientific">Arabidopsis thaliana</name>
    <name type="common">Mouse-ear cress</name>
    <dbReference type="NCBI Taxonomy" id="3702"/>
    <lineage>
        <taxon>Eukaryota</taxon>
        <taxon>Viridiplantae</taxon>
        <taxon>Streptophyta</taxon>
        <taxon>Embryophyta</taxon>
        <taxon>Tracheophyta</taxon>
        <taxon>Spermatophyta</taxon>
        <taxon>Magnoliopsida</taxon>
        <taxon>eudicotyledons</taxon>
        <taxon>Gunneridae</taxon>
        <taxon>Pentapetalae</taxon>
        <taxon>rosids</taxon>
        <taxon>malvids</taxon>
        <taxon>Brassicales</taxon>
        <taxon>Brassicaceae</taxon>
        <taxon>Camelineae</taxon>
        <taxon>Arabidopsis</taxon>
    </lineage>
</organism>
<feature type="signal peptide" evidence="2">
    <location>
        <begin position="1"/>
        <end position="19"/>
    </location>
</feature>
<feature type="chain" id="PRO_0000379647" description="Defensin-like protein 69">
    <location>
        <begin position="20"/>
        <end position="96"/>
    </location>
</feature>
<feature type="disulfide bond" evidence="1">
    <location>
        <begin position="37"/>
        <end position="86"/>
    </location>
</feature>
<feature type="disulfide bond" evidence="1">
    <location>
        <begin position="41"/>
        <end position="64"/>
    </location>
</feature>
<feature type="disulfide bond" evidence="1">
    <location>
        <begin position="50"/>
        <end position="84"/>
    </location>
</feature>
<feature type="disulfide bond" evidence="1">
    <location>
        <begin position="54"/>
        <end position="85"/>
    </location>
</feature>
<gene>
    <name type="ordered locus">At5g54220</name>
    <name type="ORF">MDK4.4</name>
</gene>
<accession>Q9FL73</accession>
<accession>A0MFP1</accession>
<comment type="subcellular location">
    <subcellularLocation>
        <location evidence="1">Secreted</location>
    </subcellularLocation>
</comment>
<comment type="similarity">
    <text evidence="3">Belongs to the DEFL family.</text>
</comment>
<comment type="sequence caution" evidence="3">
    <conflict type="erroneous termination">
        <sequence resource="EMBL-CDS" id="ABK28756"/>
    </conflict>
    <text>Extended C-terminus.</text>
</comment>
<name>DEF69_ARATH</name>
<sequence length="96" mass="10468">MGSSKLLVAFTLIVMMTISYDLFTGIGIDARTVPPTCYESCNATFQNPECNKMCVGLAYKDGSCIYPPPEVDGLPPKRPYFPRCCCNPIILSPPSP</sequence>